<reference key="1">
    <citation type="journal article" date="1993" name="Eur. J. Biochem.">
        <title>Cloning of the fourth functional gene for protein phosphatase 1 in Drosophila melanogaster from its chromosomal location.</title>
        <authorList>
            <person name="Dombradi V."/>
            <person name="Mann D.J."/>
            <person name="Saunders R.D."/>
            <person name="Cohen P.T.W."/>
        </authorList>
    </citation>
    <scope>NUCLEOTIDE SEQUENCE [GENOMIC DNA]</scope>
    <source>
        <strain>Oregon-R</strain>
    </source>
</reference>
<reference key="2">
    <citation type="journal article" date="2000" name="Science">
        <title>The genome sequence of Drosophila melanogaster.</title>
        <authorList>
            <person name="Adams M.D."/>
            <person name="Celniker S.E."/>
            <person name="Holt R.A."/>
            <person name="Evans C.A."/>
            <person name="Gocayne J.D."/>
            <person name="Amanatides P.G."/>
            <person name="Scherer S.E."/>
            <person name="Li P.W."/>
            <person name="Hoskins R.A."/>
            <person name="Galle R.F."/>
            <person name="George R.A."/>
            <person name="Lewis S.E."/>
            <person name="Richards S."/>
            <person name="Ashburner M."/>
            <person name="Henderson S.N."/>
            <person name="Sutton G.G."/>
            <person name="Wortman J.R."/>
            <person name="Yandell M.D."/>
            <person name="Zhang Q."/>
            <person name="Chen L.X."/>
            <person name="Brandon R.C."/>
            <person name="Rogers Y.-H.C."/>
            <person name="Blazej R.G."/>
            <person name="Champe M."/>
            <person name="Pfeiffer B.D."/>
            <person name="Wan K.H."/>
            <person name="Doyle C."/>
            <person name="Baxter E.G."/>
            <person name="Helt G."/>
            <person name="Nelson C.R."/>
            <person name="Miklos G.L.G."/>
            <person name="Abril J.F."/>
            <person name="Agbayani A."/>
            <person name="An H.-J."/>
            <person name="Andrews-Pfannkoch C."/>
            <person name="Baldwin D."/>
            <person name="Ballew R.M."/>
            <person name="Basu A."/>
            <person name="Baxendale J."/>
            <person name="Bayraktaroglu L."/>
            <person name="Beasley E.M."/>
            <person name="Beeson K.Y."/>
            <person name="Benos P.V."/>
            <person name="Berman B.P."/>
            <person name="Bhandari D."/>
            <person name="Bolshakov S."/>
            <person name="Borkova D."/>
            <person name="Botchan M.R."/>
            <person name="Bouck J."/>
            <person name="Brokstein P."/>
            <person name="Brottier P."/>
            <person name="Burtis K.C."/>
            <person name="Busam D.A."/>
            <person name="Butler H."/>
            <person name="Cadieu E."/>
            <person name="Center A."/>
            <person name="Chandra I."/>
            <person name="Cherry J.M."/>
            <person name="Cawley S."/>
            <person name="Dahlke C."/>
            <person name="Davenport L.B."/>
            <person name="Davies P."/>
            <person name="de Pablos B."/>
            <person name="Delcher A."/>
            <person name="Deng Z."/>
            <person name="Mays A.D."/>
            <person name="Dew I."/>
            <person name="Dietz S.M."/>
            <person name="Dodson K."/>
            <person name="Doup L.E."/>
            <person name="Downes M."/>
            <person name="Dugan-Rocha S."/>
            <person name="Dunkov B.C."/>
            <person name="Dunn P."/>
            <person name="Durbin K.J."/>
            <person name="Evangelista C.C."/>
            <person name="Ferraz C."/>
            <person name="Ferriera S."/>
            <person name="Fleischmann W."/>
            <person name="Fosler C."/>
            <person name="Gabrielian A.E."/>
            <person name="Garg N.S."/>
            <person name="Gelbart W.M."/>
            <person name="Glasser K."/>
            <person name="Glodek A."/>
            <person name="Gong F."/>
            <person name="Gorrell J.H."/>
            <person name="Gu Z."/>
            <person name="Guan P."/>
            <person name="Harris M."/>
            <person name="Harris N.L."/>
            <person name="Harvey D.A."/>
            <person name="Heiman T.J."/>
            <person name="Hernandez J.R."/>
            <person name="Houck J."/>
            <person name="Hostin D."/>
            <person name="Houston K.A."/>
            <person name="Howland T.J."/>
            <person name="Wei M.-H."/>
            <person name="Ibegwam C."/>
            <person name="Jalali M."/>
            <person name="Kalush F."/>
            <person name="Karpen G.H."/>
            <person name="Ke Z."/>
            <person name="Kennison J.A."/>
            <person name="Ketchum K.A."/>
            <person name="Kimmel B.E."/>
            <person name="Kodira C.D."/>
            <person name="Kraft C.L."/>
            <person name="Kravitz S."/>
            <person name="Kulp D."/>
            <person name="Lai Z."/>
            <person name="Lasko P."/>
            <person name="Lei Y."/>
            <person name="Levitsky A.A."/>
            <person name="Li J.H."/>
            <person name="Li Z."/>
            <person name="Liang Y."/>
            <person name="Lin X."/>
            <person name="Liu X."/>
            <person name="Mattei B."/>
            <person name="McIntosh T.C."/>
            <person name="McLeod M.P."/>
            <person name="McPherson D."/>
            <person name="Merkulov G."/>
            <person name="Milshina N.V."/>
            <person name="Mobarry C."/>
            <person name="Morris J."/>
            <person name="Moshrefi A."/>
            <person name="Mount S.M."/>
            <person name="Moy M."/>
            <person name="Murphy B."/>
            <person name="Murphy L."/>
            <person name="Muzny D.M."/>
            <person name="Nelson D.L."/>
            <person name="Nelson D.R."/>
            <person name="Nelson K.A."/>
            <person name="Nixon K."/>
            <person name="Nusskern D.R."/>
            <person name="Pacleb J.M."/>
            <person name="Palazzolo M."/>
            <person name="Pittman G.S."/>
            <person name="Pan S."/>
            <person name="Pollard J."/>
            <person name="Puri V."/>
            <person name="Reese M.G."/>
            <person name="Reinert K."/>
            <person name="Remington K."/>
            <person name="Saunders R.D.C."/>
            <person name="Scheeler F."/>
            <person name="Shen H."/>
            <person name="Shue B.C."/>
            <person name="Siden-Kiamos I."/>
            <person name="Simpson M."/>
            <person name="Skupski M.P."/>
            <person name="Smith T.J."/>
            <person name="Spier E."/>
            <person name="Spradling A.C."/>
            <person name="Stapleton M."/>
            <person name="Strong R."/>
            <person name="Sun E."/>
            <person name="Svirskas R."/>
            <person name="Tector C."/>
            <person name="Turner R."/>
            <person name="Venter E."/>
            <person name="Wang A.H."/>
            <person name="Wang X."/>
            <person name="Wang Z.-Y."/>
            <person name="Wassarman D.A."/>
            <person name="Weinstock G.M."/>
            <person name="Weissenbach J."/>
            <person name="Williams S.M."/>
            <person name="Woodage T."/>
            <person name="Worley K.C."/>
            <person name="Wu D."/>
            <person name="Yang S."/>
            <person name="Yao Q.A."/>
            <person name="Ye J."/>
            <person name="Yeh R.-F."/>
            <person name="Zaveri J.S."/>
            <person name="Zhan M."/>
            <person name="Zhang G."/>
            <person name="Zhao Q."/>
            <person name="Zheng L."/>
            <person name="Zheng X.H."/>
            <person name="Zhong F.N."/>
            <person name="Zhong W."/>
            <person name="Zhou X."/>
            <person name="Zhu S.C."/>
            <person name="Zhu X."/>
            <person name="Smith H.O."/>
            <person name="Gibbs R.A."/>
            <person name="Myers E.W."/>
            <person name="Rubin G.M."/>
            <person name="Venter J.C."/>
        </authorList>
    </citation>
    <scope>NUCLEOTIDE SEQUENCE [LARGE SCALE GENOMIC DNA]</scope>
    <source>
        <strain>Berkeley</strain>
    </source>
</reference>
<reference key="3">
    <citation type="journal article" date="2002" name="Genome Biol.">
        <title>Annotation of the Drosophila melanogaster euchromatic genome: a systematic review.</title>
        <authorList>
            <person name="Misra S."/>
            <person name="Crosby M.A."/>
            <person name="Mungall C.J."/>
            <person name="Matthews B.B."/>
            <person name="Campbell K.S."/>
            <person name="Hradecky P."/>
            <person name="Huang Y."/>
            <person name="Kaminker J.S."/>
            <person name="Millburn G.H."/>
            <person name="Prochnik S.E."/>
            <person name="Smith C.D."/>
            <person name="Tupy J.L."/>
            <person name="Whitfield E.J."/>
            <person name="Bayraktaroglu L."/>
            <person name="Berman B.P."/>
            <person name="Bettencourt B.R."/>
            <person name="Celniker S.E."/>
            <person name="de Grey A.D.N.J."/>
            <person name="Drysdale R.A."/>
            <person name="Harris N.L."/>
            <person name="Richter J."/>
            <person name="Russo S."/>
            <person name="Schroeder A.J."/>
            <person name="Shu S.Q."/>
            <person name="Stapleton M."/>
            <person name="Yamada C."/>
            <person name="Ashburner M."/>
            <person name="Gelbart W.M."/>
            <person name="Rubin G.M."/>
            <person name="Lewis S.E."/>
        </authorList>
    </citation>
    <scope>GENOME REANNOTATION</scope>
    <source>
        <strain>Berkeley</strain>
    </source>
</reference>
<reference key="4">
    <citation type="journal article" date="2002" name="Genome Biol.">
        <title>A Drosophila full-length cDNA resource.</title>
        <authorList>
            <person name="Stapleton M."/>
            <person name="Carlson J.W."/>
            <person name="Brokstein P."/>
            <person name="Yu C."/>
            <person name="Champe M."/>
            <person name="George R.A."/>
            <person name="Guarin H."/>
            <person name="Kronmiller B."/>
            <person name="Pacleb J.M."/>
            <person name="Park S."/>
            <person name="Wan K.H."/>
            <person name="Rubin G.M."/>
            <person name="Celniker S.E."/>
        </authorList>
    </citation>
    <scope>NUCLEOTIDE SEQUENCE [LARGE SCALE MRNA]</scope>
    <source>
        <strain>Berkeley</strain>
        <tissue>Head</tissue>
    </source>
</reference>
<reference key="5">
    <citation type="journal article" date="2006" name="J. Mol. Biol.">
        <title>Towards a comprehensive analysis of the protein phosphatase 1 interactome in Drosophila.</title>
        <authorList>
            <person name="Bennett D."/>
            <person name="Lyulcheva E."/>
            <person name="Alphey L."/>
        </authorList>
    </citation>
    <scope>INTERACTION WITH NOP17L</scope>
</reference>
<proteinExistence type="evidence at protein level"/>
<sequence>MAEVLNLESIISRLLEVRGARPGKNVQLSEGEIRGLCLKSREILLAQPILLELEAPLKICGDIHGQYYDLLRLFEYGGYPPEANYLFLGDYVDRGKQSLETICLLLAYKIKYSENFFLLRGNHECASINRIYGFYDECKRRYTIKLWKTFTDCFNCLPVVAIVDEKIFCCHGGLSPDLTSMEQIRRIMRPTDVPDQGLLCDLLWSDPDKDTIGWGENDRGVSFTFGAEVVVKFLQKHDLDLICRAHQVVEDGYEFFAKRQLVTLFSAPNYCGEFDNAGAMMSVDNTLMCSFQILKPVEKRKK</sequence>
<name>PP13_DROME</name>
<evidence type="ECO:0000250" key="1"/>
<evidence type="ECO:0000269" key="2">
    <source>
    </source>
</evidence>
<evidence type="ECO:0000305" key="3"/>
<accession>Q05547</accession>
<accession>Q9VXW0</accession>
<feature type="chain" id="PRO_0000058793" description="Serine/threonine-protein phosphatase alpha-3 isoform">
    <location>
        <begin position="1"/>
        <end position="302"/>
    </location>
</feature>
<feature type="active site" description="Proton donor" evidence="1">
    <location>
        <position position="123"/>
    </location>
</feature>
<feature type="binding site" evidence="1">
    <location>
        <position position="62"/>
    </location>
    <ligand>
        <name>Mn(2+)</name>
        <dbReference type="ChEBI" id="CHEBI:29035"/>
        <label>1</label>
    </ligand>
</feature>
<feature type="binding site" evidence="1">
    <location>
        <position position="64"/>
    </location>
    <ligand>
        <name>Mn(2+)</name>
        <dbReference type="ChEBI" id="CHEBI:29035"/>
        <label>1</label>
    </ligand>
</feature>
<feature type="binding site" evidence="1">
    <location>
        <position position="90"/>
    </location>
    <ligand>
        <name>Mn(2+)</name>
        <dbReference type="ChEBI" id="CHEBI:29035"/>
        <label>1</label>
    </ligand>
</feature>
<feature type="binding site" evidence="1">
    <location>
        <position position="90"/>
    </location>
    <ligand>
        <name>Mn(2+)</name>
        <dbReference type="ChEBI" id="CHEBI:29035"/>
        <label>2</label>
    </ligand>
</feature>
<feature type="binding site" evidence="1">
    <location>
        <position position="122"/>
    </location>
    <ligand>
        <name>Mn(2+)</name>
        <dbReference type="ChEBI" id="CHEBI:29035"/>
        <label>2</label>
    </ligand>
</feature>
<feature type="binding site" evidence="1">
    <location>
        <position position="171"/>
    </location>
    <ligand>
        <name>Mn(2+)</name>
        <dbReference type="ChEBI" id="CHEBI:29035"/>
        <label>2</label>
    </ligand>
</feature>
<feature type="binding site" evidence="1">
    <location>
        <position position="246"/>
    </location>
    <ligand>
        <name>Mn(2+)</name>
        <dbReference type="ChEBI" id="CHEBI:29035"/>
        <label>2</label>
    </ligand>
</feature>
<dbReference type="EC" id="3.1.3.16"/>
<dbReference type="EMBL" id="X69974">
    <property type="protein sequence ID" value="CAA49594.1"/>
    <property type="molecule type" value="Genomic_DNA"/>
</dbReference>
<dbReference type="EMBL" id="AE014298">
    <property type="protein sequence ID" value="AAF48448.1"/>
    <property type="molecule type" value="Genomic_DNA"/>
</dbReference>
<dbReference type="EMBL" id="AY060272">
    <property type="protein sequence ID" value="AAL25311.1"/>
    <property type="molecule type" value="mRNA"/>
</dbReference>
<dbReference type="PIR" id="S29396">
    <property type="entry name" value="S29396"/>
</dbReference>
<dbReference type="RefSeq" id="NP_524921.1">
    <property type="nucleotide sequence ID" value="NM_080182.3"/>
</dbReference>
<dbReference type="SMR" id="Q05547"/>
<dbReference type="BioGRID" id="71473">
    <property type="interactions" value="34"/>
</dbReference>
<dbReference type="DIP" id="DIP-23332N"/>
<dbReference type="FunCoup" id="Q05547">
    <property type="interactions" value="211"/>
</dbReference>
<dbReference type="IntAct" id="Q05547">
    <property type="interactions" value="29"/>
</dbReference>
<dbReference type="STRING" id="7227.FBpp0073834"/>
<dbReference type="PaxDb" id="7227-FBpp0073834"/>
<dbReference type="DNASU" id="48531"/>
<dbReference type="EnsemblMetazoa" id="FBtr0074017">
    <property type="protein sequence ID" value="FBpp0073834"/>
    <property type="gene ID" value="FBgn0003132"/>
</dbReference>
<dbReference type="GeneID" id="48531"/>
<dbReference type="KEGG" id="dme:Dmel_CG9156"/>
<dbReference type="AGR" id="FB:FBgn0003132"/>
<dbReference type="CTD" id="48531"/>
<dbReference type="FlyBase" id="FBgn0003132">
    <property type="gene designation" value="Pp1-13C"/>
</dbReference>
<dbReference type="VEuPathDB" id="VectorBase:FBgn0003132"/>
<dbReference type="eggNOG" id="KOG0374">
    <property type="taxonomic scope" value="Eukaryota"/>
</dbReference>
<dbReference type="GeneTree" id="ENSGT00940000153472"/>
<dbReference type="HOGENOM" id="CLU_004962_0_0_1"/>
<dbReference type="InParanoid" id="Q05547"/>
<dbReference type="OMA" id="EEHEIRY"/>
<dbReference type="OrthoDB" id="1930084at2759"/>
<dbReference type="PhylomeDB" id="Q05547"/>
<dbReference type="Reactome" id="R-DME-538898">
    <property type="pathway name" value="Dephosphorylation of TIM"/>
</dbReference>
<dbReference type="BioGRID-ORCS" id="48531">
    <property type="hits" value="0 hits in 3 CRISPR screens"/>
</dbReference>
<dbReference type="GenomeRNAi" id="48531"/>
<dbReference type="PRO" id="PR:Q05547"/>
<dbReference type="Proteomes" id="UP000000803">
    <property type="component" value="Chromosome X"/>
</dbReference>
<dbReference type="Bgee" id="FBgn0003132">
    <property type="expression patterns" value="Expressed in early elongation stage spermatid (Drosophila) in testis and 20 other cell types or tissues"/>
</dbReference>
<dbReference type="ExpressionAtlas" id="Q05547">
    <property type="expression patterns" value="baseline and differential"/>
</dbReference>
<dbReference type="GO" id="GO:0005737">
    <property type="term" value="C:cytoplasm"/>
    <property type="evidence" value="ECO:0000318"/>
    <property type="project" value="GO_Central"/>
</dbReference>
<dbReference type="GO" id="GO:0005829">
    <property type="term" value="C:cytosol"/>
    <property type="evidence" value="ECO:0000304"/>
    <property type="project" value="Reactome"/>
</dbReference>
<dbReference type="GO" id="GO:0005634">
    <property type="term" value="C:nucleus"/>
    <property type="evidence" value="ECO:0000318"/>
    <property type="project" value="GO_Central"/>
</dbReference>
<dbReference type="GO" id="GO:0000164">
    <property type="term" value="C:protein phosphatase type 1 complex"/>
    <property type="evidence" value="ECO:0000314"/>
    <property type="project" value="FlyBase"/>
</dbReference>
<dbReference type="GO" id="GO:0046872">
    <property type="term" value="F:metal ion binding"/>
    <property type="evidence" value="ECO:0007669"/>
    <property type="project" value="UniProtKB-KW"/>
</dbReference>
<dbReference type="GO" id="GO:0004722">
    <property type="term" value="F:protein serine/threonine phosphatase activity"/>
    <property type="evidence" value="ECO:0000314"/>
    <property type="project" value="FlyBase"/>
</dbReference>
<dbReference type="GO" id="GO:0030514">
    <property type="term" value="P:negative regulation of BMP signaling pathway"/>
    <property type="evidence" value="ECO:0000316"/>
    <property type="project" value="FlyBase"/>
</dbReference>
<dbReference type="GO" id="GO:0045879">
    <property type="term" value="P:negative regulation of smoothened signaling pathway"/>
    <property type="evidence" value="ECO:0000316"/>
    <property type="project" value="FlyBase"/>
</dbReference>
<dbReference type="GO" id="GO:0005979">
    <property type="term" value="P:regulation of glycogen biosynthetic process"/>
    <property type="evidence" value="ECO:0000250"/>
    <property type="project" value="FlyBase"/>
</dbReference>
<dbReference type="GO" id="GO:0005981">
    <property type="term" value="P:regulation of glycogen catabolic process"/>
    <property type="evidence" value="ECO:0000250"/>
    <property type="project" value="FlyBase"/>
</dbReference>
<dbReference type="CDD" id="cd07414">
    <property type="entry name" value="MPP_PP1_PPKL"/>
    <property type="match status" value="1"/>
</dbReference>
<dbReference type="FunFam" id="3.60.21.10:FF:000004">
    <property type="entry name" value="Serine/threonine-protein phosphatase"/>
    <property type="match status" value="1"/>
</dbReference>
<dbReference type="Gene3D" id="3.60.21.10">
    <property type="match status" value="1"/>
</dbReference>
<dbReference type="InterPro" id="IPR004843">
    <property type="entry name" value="Calcineurin-like_PHP_ApaH"/>
</dbReference>
<dbReference type="InterPro" id="IPR029052">
    <property type="entry name" value="Metallo-depent_PP-like"/>
</dbReference>
<dbReference type="InterPro" id="IPR050341">
    <property type="entry name" value="PP1_catalytic_subunit"/>
</dbReference>
<dbReference type="InterPro" id="IPR006186">
    <property type="entry name" value="Ser/Thr-sp_prot-phosphatase"/>
</dbReference>
<dbReference type="InterPro" id="IPR031675">
    <property type="entry name" value="STPPase_N"/>
</dbReference>
<dbReference type="PANTHER" id="PTHR11668">
    <property type="entry name" value="SERINE/THREONINE PROTEIN PHOSPHATASE"/>
    <property type="match status" value="1"/>
</dbReference>
<dbReference type="PANTHER" id="PTHR11668:SF300">
    <property type="entry name" value="SERINE_THREONINE-PROTEIN PHOSPHATASE"/>
    <property type="match status" value="1"/>
</dbReference>
<dbReference type="Pfam" id="PF00149">
    <property type="entry name" value="Metallophos"/>
    <property type="match status" value="1"/>
</dbReference>
<dbReference type="Pfam" id="PF16891">
    <property type="entry name" value="STPPase_N"/>
    <property type="match status" value="1"/>
</dbReference>
<dbReference type="PRINTS" id="PR00114">
    <property type="entry name" value="STPHPHTASE"/>
</dbReference>
<dbReference type="SMART" id="SM00156">
    <property type="entry name" value="PP2Ac"/>
    <property type="match status" value="1"/>
</dbReference>
<dbReference type="SUPFAM" id="SSF56300">
    <property type="entry name" value="Metallo-dependent phosphatases"/>
    <property type="match status" value="1"/>
</dbReference>
<dbReference type="PROSITE" id="PS00125">
    <property type="entry name" value="SER_THR_PHOSPHATASE"/>
    <property type="match status" value="1"/>
</dbReference>
<organism>
    <name type="scientific">Drosophila melanogaster</name>
    <name type="common">Fruit fly</name>
    <dbReference type="NCBI Taxonomy" id="7227"/>
    <lineage>
        <taxon>Eukaryota</taxon>
        <taxon>Metazoa</taxon>
        <taxon>Ecdysozoa</taxon>
        <taxon>Arthropoda</taxon>
        <taxon>Hexapoda</taxon>
        <taxon>Insecta</taxon>
        <taxon>Pterygota</taxon>
        <taxon>Neoptera</taxon>
        <taxon>Endopterygota</taxon>
        <taxon>Diptera</taxon>
        <taxon>Brachycera</taxon>
        <taxon>Muscomorpha</taxon>
        <taxon>Ephydroidea</taxon>
        <taxon>Drosophilidae</taxon>
        <taxon>Drosophila</taxon>
        <taxon>Sophophora</taxon>
    </lineage>
</organism>
<keyword id="KW-0378">Hydrolase</keyword>
<keyword id="KW-0464">Manganese</keyword>
<keyword id="KW-0479">Metal-binding</keyword>
<keyword id="KW-0904">Protein phosphatase</keyword>
<keyword id="KW-1185">Reference proteome</keyword>
<comment type="catalytic activity">
    <reaction>
        <text>O-phospho-L-seryl-[protein] + H2O = L-seryl-[protein] + phosphate</text>
        <dbReference type="Rhea" id="RHEA:20629"/>
        <dbReference type="Rhea" id="RHEA-COMP:9863"/>
        <dbReference type="Rhea" id="RHEA-COMP:11604"/>
        <dbReference type="ChEBI" id="CHEBI:15377"/>
        <dbReference type="ChEBI" id="CHEBI:29999"/>
        <dbReference type="ChEBI" id="CHEBI:43474"/>
        <dbReference type="ChEBI" id="CHEBI:83421"/>
        <dbReference type="EC" id="3.1.3.16"/>
    </reaction>
</comment>
<comment type="catalytic activity">
    <reaction>
        <text>O-phospho-L-threonyl-[protein] + H2O = L-threonyl-[protein] + phosphate</text>
        <dbReference type="Rhea" id="RHEA:47004"/>
        <dbReference type="Rhea" id="RHEA-COMP:11060"/>
        <dbReference type="Rhea" id="RHEA-COMP:11605"/>
        <dbReference type="ChEBI" id="CHEBI:15377"/>
        <dbReference type="ChEBI" id="CHEBI:30013"/>
        <dbReference type="ChEBI" id="CHEBI:43474"/>
        <dbReference type="ChEBI" id="CHEBI:61977"/>
        <dbReference type="EC" id="3.1.3.16"/>
    </reaction>
</comment>
<comment type="cofactor">
    <cofactor evidence="1">
        <name>Mn(2+)</name>
        <dbReference type="ChEBI" id="CHEBI:29035"/>
    </cofactor>
    <text evidence="1">Binds 2 manganese ions per subunit.</text>
</comment>
<comment type="subunit">
    <text evidence="2">Interacts with Nop17l.</text>
</comment>
<comment type="interaction">
    <interactant intactId="EBI-157144">
        <id>Q05547</id>
    </interactant>
    <interactant intactId="EBI-150380">
        <id>Q0E9G3</id>
        <label>Nop17l</label>
    </interactant>
    <organismsDiffer>false</organismsDiffer>
    <experiments>2</experiments>
</comment>
<comment type="similarity">
    <text evidence="3">Belongs to the PPP phosphatase family. PP-1 subfamily.</text>
</comment>
<gene>
    <name type="primary">Pp1-13C</name>
    <name type="ORF">CG9156</name>
</gene>
<protein>
    <recommendedName>
        <fullName>Serine/threonine-protein phosphatase alpha-3 isoform</fullName>
        <ecNumber>3.1.3.16</ecNumber>
    </recommendedName>
</protein>